<comment type="function">
    <text evidence="4 7">Water channel required to facilitate the transport of water across membranes (Probable). May play a role in the vegetative growth (PubMed:26527167).</text>
</comment>
<comment type="catalytic activity">
    <reaction evidence="7">
        <text>H2O(in) = H2O(out)</text>
        <dbReference type="Rhea" id="RHEA:29667"/>
        <dbReference type="ChEBI" id="CHEBI:15377"/>
    </reaction>
</comment>
<comment type="catalytic activity">
    <reaction evidence="7">
        <text>glycerol(in) = glycerol(out)</text>
        <dbReference type="Rhea" id="RHEA:29675"/>
        <dbReference type="ChEBI" id="CHEBI:17754"/>
    </reaction>
</comment>
<comment type="subcellular location">
    <subcellularLocation>
        <location evidence="1">Membrane</location>
        <topology evidence="1">Multi-pass membrane protein</topology>
    </subcellularLocation>
</comment>
<comment type="induction">
    <text evidence="4">Expression is higher in vegetative hyphae than in conidia and infection structures.</text>
</comment>
<comment type="domain">
    <text evidence="7">Aquaporins contain two tandem repeats each containing three membrane-spanning domains and a pore-forming loop with the signature motif Asn-Pro-Ala (NPA) (Probable). AQP4 has NPA/NPS motifs which is in accordance with the fungal aquaporins (NPx and NxA) (Probable).</text>
</comment>
<comment type="disruption phenotype">
    <text evidence="4">Leads to a slight reduction in the vegetative growth rate and delayed conidiation.</text>
</comment>
<comment type="similarity">
    <text evidence="6">Belongs to the MIP/aquaporin (TC 1.A.8) family.</text>
</comment>
<reference key="1">
    <citation type="journal article" date="2011" name="PLoS Genet.">
        <title>Genomic analysis of the necrotrophic fungal pathogens Sclerotinia sclerotiorum and Botrytis cinerea.</title>
        <authorList>
            <person name="Amselem J."/>
            <person name="Cuomo C.A."/>
            <person name="van Kan J.A.L."/>
            <person name="Viaud M."/>
            <person name="Benito E.P."/>
            <person name="Couloux A."/>
            <person name="Coutinho P.M."/>
            <person name="de Vries R.P."/>
            <person name="Dyer P.S."/>
            <person name="Fillinger S."/>
            <person name="Fournier E."/>
            <person name="Gout L."/>
            <person name="Hahn M."/>
            <person name="Kohn L."/>
            <person name="Lapalu N."/>
            <person name="Plummer K.M."/>
            <person name="Pradier J.-M."/>
            <person name="Quevillon E."/>
            <person name="Sharon A."/>
            <person name="Simon A."/>
            <person name="ten Have A."/>
            <person name="Tudzynski B."/>
            <person name="Tudzynski P."/>
            <person name="Wincker P."/>
            <person name="Andrew M."/>
            <person name="Anthouard V."/>
            <person name="Beever R.E."/>
            <person name="Beffa R."/>
            <person name="Benoit I."/>
            <person name="Bouzid O."/>
            <person name="Brault B."/>
            <person name="Chen Z."/>
            <person name="Choquer M."/>
            <person name="Collemare J."/>
            <person name="Cotton P."/>
            <person name="Danchin E.G."/>
            <person name="Da Silva C."/>
            <person name="Gautier A."/>
            <person name="Giraud C."/>
            <person name="Giraud T."/>
            <person name="Gonzalez C."/>
            <person name="Grossetete S."/>
            <person name="Gueldener U."/>
            <person name="Henrissat B."/>
            <person name="Howlett B.J."/>
            <person name="Kodira C."/>
            <person name="Kretschmer M."/>
            <person name="Lappartient A."/>
            <person name="Leroch M."/>
            <person name="Levis C."/>
            <person name="Mauceli E."/>
            <person name="Neuveglise C."/>
            <person name="Oeser B."/>
            <person name="Pearson M."/>
            <person name="Poulain J."/>
            <person name="Poussereau N."/>
            <person name="Quesneville H."/>
            <person name="Rascle C."/>
            <person name="Schumacher J."/>
            <person name="Segurens B."/>
            <person name="Sexton A."/>
            <person name="Silva E."/>
            <person name="Sirven C."/>
            <person name="Soanes D.M."/>
            <person name="Talbot N.J."/>
            <person name="Templeton M."/>
            <person name="Yandava C."/>
            <person name="Yarden O."/>
            <person name="Zeng Q."/>
            <person name="Rollins J.A."/>
            <person name="Lebrun M.-H."/>
            <person name="Dickman M."/>
        </authorList>
    </citation>
    <scope>NUCLEOTIDE SEQUENCE [LARGE SCALE GENOMIC DNA]</scope>
    <source>
        <strain>B05.10</strain>
    </source>
</reference>
<reference key="2">
    <citation type="journal article" date="2012" name="Eukaryot. Cell">
        <title>Genome update of Botrytis cinerea strains B05.10 and T4.</title>
        <authorList>
            <person name="Staats M."/>
            <person name="van Kan J.A.L."/>
        </authorList>
    </citation>
    <scope>NUCLEOTIDE SEQUENCE [LARGE SCALE GENOMIC DNA]</scope>
    <source>
        <strain>B05.10</strain>
    </source>
</reference>
<reference key="3">
    <citation type="journal article" date="2017" name="Mol. Plant Pathol.">
        <title>A gapless genome sequence of the fungus Botrytis cinerea.</title>
        <authorList>
            <person name="van Kan J.A.L."/>
            <person name="Stassen J.H.M."/>
            <person name="Mosbach A."/>
            <person name="van der Lee T.A.J."/>
            <person name="Faino L."/>
            <person name="Farmer A.D."/>
            <person name="Papasotiriou D.G."/>
            <person name="Zhou S."/>
            <person name="Seidl M.F."/>
            <person name="Cottam E."/>
            <person name="Edel D."/>
            <person name="Hahn M."/>
            <person name="Schwartz D.C."/>
            <person name="Dietrich R.A."/>
            <person name="Widdison S."/>
            <person name="Scalliet G."/>
        </authorList>
    </citation>
    <scope>NUCLEOTIDE SEQUENCE [LARGE SCALE GENOMIC DNA]</scope>
    <source>
        <strain>B05.10</strain>
    </source>
</reference>
<reference key="4">
    <citation type="journal article" date="2016" name="New Phytol.">
        <title>Aquaporin8 regulates cellular development and reactive oxygen species production, a critical component of virulence in Botrytis cinerea.</title>
        <authorList>
            <person name="An B."/>
            <person name="Li B."/>
            <person name="Li H."/>
            <person name="Zhang Z."/>
            <person name="Qin G."/>
            <person name="Tian S."/>
        </authorList>
    </citation>
    <scope>FUNCTION</scope>
    <scope>DOMAIN</scope>
    <scope>INDUCTION</scope>
    <scope>DISRUPTION PHENOTYPE</scope>
</reference>
<dbReference type="EMBL" id="CP009812">
    <property type="protein sequence ID" value="ATZ52480.1"/>
    <property type="molecule type" value="Genomic_DNA"/>
</dbReference>
<dbReference type="RefSeq" id="XP_001553449.1">
    <property type="nucleotide sequence ID" value="XM_001553399.1"/>
</dbReference>
<dbReference type="SMR" id="A0A384JPP3"/>
<dbReference type="EnsemblFungi" id="Bcin08g01870.1">
    <property type="protein sequence ID" value="Bcin08p01870.1"/>
    <property type="gene ID" value="Bcin08g01870"/>
</dbReference>
<dbReference type="KEGG" id="bfu:BCIN_08g01870"/>
<dbReference type="VEuPathDB" id="FungiDB:Bcin08g01870"/>
<dbReference type="OrthoDB" id="3222at2759"/>
<dbReference type="Proteomes" id="UP000001798">
    <property type="component" value="Chromosome bcin08"/>
</dbReference>
<dbReference type="GO" id="GO:0005886">
    <property type="term" value="C:plasma membrane"/>
    <property type="evidence" value="ECO:0007669"/>
    <property type="project" value="TreeGrafter"/>
</dbReference>
<dbReference type="GO" id="GO:0015254">
    <property type="term" value="F:glycerol channel activity"/>
    <property type="evidence" value="ECO:0007669"/>
    <property type="project" value="TreeGrafter"/>
</dbReference>
<dbReference type="GO" id="GO:0015250">
    <property type="term" value="F:water channel activity"/>
    <property type="evidence" value="ECO:0007669"/>
    <property type="project" value="TreeGrafter"/>
</dbReference>
<dbReference type="CDD" id="cd00333">
    <property type="entry name" value="MIP"/>
    <property type="match status" value="1"/>
</dbReference>
<dbReference type="FunFam" id="1.20.1080.10:FF:000022">
    <property type="entry name" value="MIP aquaporin"/>
    <property type="match status" value="1"/>
</dbReference>
<dbReference type="Gene3D" id="1.20.1080.10">
    <property type="entry name" value="Glycerol uptake facilitator protein"/>
    <property type="match status" value="1"/>
</dbReference>
<dbReference type="InterPro" id="IPR023271">
    <property type="entry name" value="Aquaporin-like"/>
</dbReference>
<dbReference type="InterPro" id="IPR000425">
    <property type="entry name" value="MIP"/>
</dbReference>
<dbReference type="InterPro" id="IPR050363">
    <property type="entry name" value="MIP/Aquaporin"/>
</dbReference>
<dbReference type="NCBIfam" id="TIGR00861">
    <property type="entry name" value="MIP"/>
    <property type="match status" value="1"/>
</dbReference>
<dbReference type="PANTHER" id="PTHR43829">
    <property type="entry name" value="AQUAPORIN OR AQUAGLYCEROPORIN RELATED"/>
    <property type="match status" value="1"/>
</dbReference>
<dbReference type="PANTHER" id="PTHR43829:SF24">
    <property type="entry name" value="MIP AQUAPORIN (EUROFUNG)"/>
    <property type="match status" value="1"/>
</dbReference>
<dbReference type="Pfam" id="PF00230">
    <property type="entry name" value="MIP"/>
    <property type="match status" value="1"/>
</dbReference>
<dbReference type="PRINTS" id="PR00783">
    <property type="entry name" value="MINTRINSICP"/>
</dbReference>
<dbReference type="SUPFAM" id="SSF81338">
    <property type="entry name" value="Aquaporin-like"/>
    <property type="match status" value="1"/>
</dbReference>
<proteinExistence type="evidence at transcript level"/>
<protein>
    <recommendedName>
        <fullName evidence="5">Aquaglyceroporin-4</fullName>
    </recommendedName>
</protein>
<accession>A0A384JPP3</accession>
<feature type="chain" id="PRO_0000457442" description="Aquaglyceroporin-4">
    <location>
        <begin position="1"/>
        <end position="724"/>
    </location>
</feature>
<feature type="topological domain" description="Cytoplasmic" evidence="6">
    <location>
        <begin position="1"/>
        <end position="434"/>
    </location>
</feature>
<feature type="transmembrane region" description="Helical" evidence="1">
    <location>
        <begin position="435"/>
        <end position="455"/>
    </location>
</feature>
<feature type="topological domain" description="Extracellular" evidence="6">
    <location>
        <begin position="456"/>
        <end position="472"/>
    </location>
</feature>
<feature type="transmembrane region" description="Helical" evidence="1">
    <location>
        <begin position="473"/>
        <end position="493"/>
    </location>
</feature>
<feature type="topological domain" description="Cytoplasmic" evidence="6">
    <location>
        <begin position="494"/>
        <end position="513"/>
    </location>
</feature>
<feature type="transmembrane region" description="Helical" evidence="1">
    <location>
        <begin position="514"/>
        <end position="534"/>
    </location>
</feature>
<feature type="topological domain" description="Extracellular" evidence="6">
    <location>
        <begin position="535"/>
        <end position="567"/>
    </location>
</feature>
<feature type="transmembrane region" description="Helical" evidence="1">
    <location>
        <begin position="568"/>
        <end position="588"/>
    </location>
</feature>
<feature type="topological domain" description="Cytoplasmic" evidence="6">
    <location>
        <begin position="589"/>
        <end position="595"/>
    </location>
</feature>
<feature type="transmembrane region" description="Helical" evidence="1">
    <location>
        <begin position="596"/>
        <end position="616"/>
    </location>
</feature>
<feature type="topological domain" description="Extracellular" evidence="6">
    <location>
        <begin position="617"/>
        <end position="647"/>
    </location>
</feature>
<feature type="transmembrane region" description="Helical" evidence="1">
    <location>
        <begin position="648"/>
        <end position="668"/>
    </location>
</feature>
<feature type="topological domain" description="Cytoplasmic" evidence="6">
    <location>
        <begin position="669"/>
        <end position="724"/>
    </location>
</feature>
<feature type="region of interest" description="Disordered" evidence="3">
    <location>
        <begin position="1"/>
        <end position="167"/>
    </location>
</feature>
<feature type="region of interest" description="Disordered" evidence="3">
    <location>
        <begin position="248"/>
        <end position="267"/>
    </location>
</feature>
<feature type="region of interest" description="Disordered" evidence="3">
    <location>
        <begin position="302"/>
        <end position="396"/>
    </location>
</feature>
<feature type="short sequence motif" description="NPA 1" evidence="7">
    <location>
        <begin position="494"/>
        <end position="496"/>
    </location>
</feature>
<feature type="short sequence motif" description="NPA 2" evidence="7">
    <location>
        <begin position="624"/>
        <end position="626"/>
    </location>
</feature>
<feature type="compositionally biased region" description="Polar residues" evidence="3">
    <location>
        <begin position="87"/>
        <end position="96"/>
    </location>
</feature>
<feature type="compositionally biased region" description="Low complexity" evidence="3">
    <location>
        <begin position="252"/>
        <end position="265"/>
    </location>
</feature>
<feature type="compositionally biased region" description="Polar residues" evidence="3">
    <location>
        <begin position="307"/>
        <end position="325"/>
    </location>
</feature>
<feature type="compositionally biased region" description="Polar residues" evidence="3">
    <location>
        <begin position="360"/>
        <end position="370"/>
    </location>
</feature>
<feature type="glycosylation site" description="N-linked (GlcNAc...) asparagine" evidence="2">
    <location>
        <position position="565"/>
    </location>
</feature>
<keyword id="KW-0325">Glycoprotein</keyword>
<keyword id="KW-0472">Membrane</keyword>
<keyword id="KW-1185">Reference proteome</keyword>
<keyword id="KW-0677">Repeat</keyword>
<keyword id="KW-0812">Transmembrane</keyword>
<keyword id="KW-1133">Transmembrane helix</keyword>
<keyword id="KW-0813">Transport</keyword>
<evidence type="ECO:0000255" key="1"/>
<evidence type="ECO:0000255" key="2">
    <source>
        <dbReference type="PROSITE-ProRule" id="PRU00498"/>
    </source>
</evidence>
<evidence type="ECO:0000256" key="3">
    <source>
        <dbReference type="SAM" id="MobiDB-lite"/>
    </source>
</evidence>
<evidence type="ECO:0000269" key="4">
    <source>
    </source>
</evidence>
<evidence type="ECO:0000303" key="5">
    <source>
    </source>
</evidence>
<evidence type="ECO:0000305" key="6"/>
<evidence type="ECO:0000305" key="7">
    <source>
    </source>
</evidence>
<gene>
    <name evidence="5" type="primary">AQP4</name>
    <name type="ORF">BCIN_08g01870</name>
</gene>
<sequence length="724" mass="79291">MADEEIKPTSSIEAGGGQNNEHEHGMTSLPNLPSTREETPRELSPVAGSSRAQSTGEQGVKPLKRFDTLPTRRSQLSPDTRRRGRTLTGQVPQDNDLSSRRQVFRRGTSVLSGESGDRMRSIPERGPVPPTTERESRPSGVSDRTQASGLRPRRSTTSRQRGPSIRRRPTVALEAVTSGADVGGGDNFTLAGPAPIETSAQNQPYVDPGYAHLNPAYVQPENVRPVWGLAKPLPRVVRPGMIPSRTEINMAQQQQQQQQQQPQNQADVDLEQGRIEPTLKLSRISTALQNARQQRENNLMEAHGLVSPTNLQTTASRQEPLTAPSQVIEEEDLADKPTNTDTTSPERPPTRPPLSFDGRPSQTSQNSQNEPFPALSDHDDQESVATEVAGPDDLDGEWIGQEIPLVAYDPNYDDEIHNLHTHWSVIRLRFREPLAELLAVTCQLTLGFCADLVVVTSGKNASPAGNEATTDWAWGLASMLGIYIAGGISGAHLNPAISIMLWIYRGFPLRKVPMYVLAQILGAFIAALISFGLYQTNIVEYGGTDLKTSDTMGAFITYPRYPWINASTSFFTEFVGTAILAVAVLALGDDMNAPPGAGMSAFILGLVITVLSMAFGYNTGAALNPSRDLGPRLALAALGYGKDLFTDVYWIWGNWCAPILGAIFGAFLYDAAIFAGGESPVNYPRKRIKRAGHKWRKKWGVRLRKMKPAKKGEDEAYRRWKESQ</sequence>
<name>AQP4_BOTFB</name>
<organism>
    <name type="scientific">Botryotinia fuckeliana (strain B05.10)</name>
    <name type="common">Noble rot fungus</name>
    <name type="synonym">Botrytis cinerea</name>
    <dbReference type="NCBI Taxonomy" id="332648"/>
    <lineage>
        <taxon>Eukaryota</taxon>
        <taxon>Fungi</taxon>
        <taxon>Dikarya</taxon>
        <taxon>Ascomycota</taxon>
        <taxon>Pezizomycotina</taxon>
        <taxon>Leotiomycetes</taxon>
        <taxon>Helotiales</taxon>
        <taxon>Sclerotiniaceae</taxon>
        <taxon>Botrytis</taxon>
    </lineage>
</organism>